<gene>
    <name type="primary">gatA</name>
    <name type="ordered locus">MTH_1496</name>
</gene>
<organism>
    <name type="scientific">Methanothermobacter thermautotrophicus (strain ATCC 29096 / DSM 1053 / JCM 10044 / NBRC 100330 / Delta H)</name>
    <name type="common">Methanobacterium thermoautotrophicum</name>
    <dbReference type="NCBI Taxonomy" id="187420"/>
    <lineage>
        <taxon>Archaea</taxon>
        <taxon>Methanobacteriati</taxon>
        <taxon>Methanobacteriota</taxon>
        <taxon>Methanomada group</taxon>
        <taxon>Methanobacteria</taxon>
        <taxon>Methanobacteriales</taxon>
        <taxon>Methanobacteriaceae</taxon>
        <taxon>Methanothermobacter</taxon>
    </lineage>
</organism>
<reference key="1">
    <citation type="journal article" date="1997" name="J. Bacteriol.">
        <title>Complete genome sequence of Methanobacterium thermoautotrophicum deltaH: functional analysis and comparative genomics.</title>
        <authorList>
            <person name="Smith D.R."/>
            <person name="Doucette-Stamm L.A."/>
            <person name="Deloughery C."/>
            <person name="Lee H.-M."/>
            <person name="Dubois J."/>
            <person name="Aldredge T."/>
            <person name="Bashirzadeh R."/>
            <person name="Blakely D."/>
            <person name="Cook R."/>
            <person name="Gilbert K."/>
            <person name="Harrison D."/>
            <person name="Hoang L."/>
            <person name="Keagle P."/>
            <person name="Lumm W."/>
            <person name="Pothier B."/>
            <person name="Qiu D."/>
            <person name="Spadafora R."/>
            <person name="Vicare R."/>
            <person name="Wang Y."/>
            <person name="Wierzbowski J."/>
            <person name="Gibson R."/>
            <person name="Jiwani N."/>
            <person name="Caruso A."/>
            <person name="Bush D."/>
            <person name="Safer H."/>
            <person name="Patwell D."/>
            <person name="Prabhakar S."/>
            <person name="McDougall S."/>
            <person name="Shimer G."/>
            <person name="Goyal A."/>
            <person name="Pietrovski S."/>
            <person name="Church G.M."/>
            <person name="Daniels C.J."/>
            <person name="Mao J.-I."/>
            <person name="Rice P."/>
            <person name="Noelling J."/>
            <person name="Reeve J.N."/>
        </authorList>
    </citation>
    <scope>NUCLEOTIDE SEQUENCE [LARGE SCALE GENOMIC DNA]</scope>
    <source>
        <strain>ATCC 29096 / DSM 1053 / JCM 10044 / NBRC 100330 / Delta H</strain>
    </source>
</reference>
<sequence>MLKMETVDKVDMIKNHGLTASENLEKFLKRIEAKNDDINAFLEVRGEEAIKRAEEIDARIASGKETGKLAGLVIGVKSNINVEDFNVSAASKTLENYTGSYDATVIRRIKEEDGIIIGMTNMDEFAAGSSTETSFFGPTDNPAAPGRIPGGSSGGSAAAVAAGMCDLALGSDTGGSIRNPASHCGVMGFKPTYGAVSRQGLLDLAMSFDQIGPLAADVSGISLALDVISGYDPADPTTLDSSPDLEVERELKGLRVGVVREFLEVTDEAIDEVIQGKLGAMEDEGAEIVELDFGYIDLCLPTYYLINYVEFFSATRKYDGRKYGHRIEDVCGSEVLRRIHMGSYISQKELSGKYYKRALQARSLIRREITGLLSHVDIIAGPTVPKLPHTLGEELEPMEMYAYDVLTVIANLAGIPAASIPAGDVGGVPVGLQLQAKPGDDGMIVSAMREIASL</sequence>
<accession>O27540</accession>
<evidence type="ECO:0000250" key="1"/>
<evidence type="ECO:0000305" key="2"/>
<protein>
    <recommendedName>
        <fullName>Glutamyl-tRNA(Gln) amidotransferase subunit A</fullName>
        <shortName>Glu-ADT subunit A</shortName>
        <ecNumber>6.3.5.7</ecNumber>
    </recommendedName>
</protein>
<feature type="chain" id="PRO_0000105235" description="Glutamyl-tRNA(Gln) amidotransferase subunit A">
    <location>
        <begin position="1"/>
        <end position="454"/>
    </location>
</feature>
<feature type="active site" description="Charge relay system" evidence="1">
    <location>
        <position position="77"/>
    </location>
</feature>
<feature type="active site" description="Charge relay system" evidence="1">
    <location>
        <position position="152"/>
    </location>
</feature>
<feature type="active site" description="Acyl-ester intermediate" evidence="1">
    <location>
        <position position="176"/>
    </location>
</feature>
<keyword id="KW-0067">ATP-binding</keyword>
<keyword id="KW-0436">Ligase</keyword>
<keyword id="KW-0547">Nucleotide-binding</keyword>
<keyword id="KW-0648">Protein biosynthesis</keyword>
<keyword id="KW-1185">Reference proteome</keyword>
<comment type="function">
    <text evidence="1">Allows the formation of correctly charged Gln-tRNA(Gln) through the transamidation of misacylated Glu-tRNA(Gln) in organisms which lack glutaminyl-tRNA synthetase. The reaction takes place in the presence of glutamine and ATP through an activated gamma-phospho-Glu-tRNA(Gln) (By similarity).</text>
</comment>
<comment type="catalytic activity">
    <reaction>
        <text>L-glutamyl-tRNA(Gln) + L-glutamine + ATP + H2O = L-glutaminyl-tRNA(Gln) + L-glutamate + ADP + phosphate + H(+)</text>
        <dbReference type="Rhea" id="RHEA:17521"/>
        <dbReference type="Rhea" id="RHEA-COMP:9681"/>
        <dbReference type="Rhea" id="RHEA-COMP:9684"/>
        <dbReference type="ChEBI" id="CHEBI:15377"/>
        <dbReference type="ChEBI" id="CHEBI:15378"/>
        <dbReference type="ChEBI" id="CHEBI:29985"/>
        <dbReference type="ChEBI" id="CHEBI:30616"/>
        <dbReference type="ChEBI" id="CHEBI:43474"/>
        <dbReference type="ChEBI" id="CHEBI:58359"/>
        <dbReference type="ChEBI" id="CHEBI:78520"/>
        <dbReference type="ChEBI" id="CHEBI:78521"/>
        <dbReference type="ChEBI" id="CHEBI:456216"/>
        <dbReference type="EC" id="6.3.5.7"/>
    </reaction>
</comment>
<comment type="subunit">
    <text evidence="1">Heterotrimer of A, B and C subunits.</text>
</comment>
<comment type="similarity">
    <text evidence="2">Belongs to the amidase family. GatA subfamily.</text>
</comment>
<proteinExistence type="inferred from homology"/>
<dbReference type="EC" id="6.3.5.7"/>
<dbReference type="EMBL" id="AE000666">
    <property type="protein sequence ID" value="AAB85971.1"/>
    <property type="molecule type" value="Genomic_DNA"/>
</dbReference>
<dbReference type="PIR" id="D69066">
    <property type="entry name" value="D69066"/>
</dbReference>
<dbReference type="SMR" id="O27540"/>
<dbReference type="FunCoup" id="O27540">
    <property type="interactions" value="119"/>
</dbReference>
<dbReference type="STRING" id="187420.MTH_1496"/>
<dbReference type="PaxDb" id="187420-MTH_1496"/>
<dbReference type="EnsemblBacteria" id="AAB85971">
    <property type="protein sequence ID" value="AAB85971"/>
    <property type="gene ID" value="MTH_1496"/>
</dbReference>
<dbReference type="KEGG" id="mth:MTH_1496"/>
<dbReference type="PATRIC" id="fig|187420.15.peg.1459"/>
<dbReference type="HOGENOM" id="CLU_009600_0_3_2"/>
<dbReference type="InParanoid" id="O27540"/>
<dbReference type="Proteomes" id="UP000005223">
    <property type="component" value="Chromosome"/>
</dbReference>
<dbReference type="GO" id="GO:0030956">
    <property type="term" value="C:glutamyl-tRNA(Gln) amidotransferase complex"/>
    <property type="evidence" value="ECO:0007669"/>
    <property type="project" value="InterPro"/>
</dbReference>
<dbReference type="GO" id="GO:0005524">
    <property type="term" value="F:ATP binding"/>
    <property type="evidence" value="ECO:0007669"/>
    <property type="project" value="UniProtKB-KW"/>
</dbReference>
<dbReference type="GO" id="GO:0050567">
    <property type="term" value="F:glutaminyl-tRNA synthase (glutamine-hydrolyzing) activity"/>
    <property type="evidence" value="ECO:0007669"/>
    <property type="project" value="UniProtKB-UniRule"/>
</dbReference>
<dbReference type="GO" id="GO:0006412">
    <property type="term" value="P:translation"/>
    <property type="evidence" value="ECO:0007669"/>
    <property type="project" value="UniProtKB-UniRule"/>
</dbReference>
<dbReference type="Gene3D" id="3.90.1300.10">
    <property type="entry name" value="Amidase signature (AS) domain"/>
    <property type="match status" value="1"/>
</dbReference>
<dbReference type="HAMAP" id="MF_00120">
    <property type="entry name" value="GatA"/>
    <property type="match status" value="1"/>
</dbReference>
<dbReference type="InterPro" id="IPR000120">
    <property type="entry name" value="Amidase"/>
</dbReference>
<dbReference type="InterPro" id="IPR020556">
    <property type="entry name" value="Amidase_CS"/>
</dbReference>
<dbReference type="InterPro" id="IPR023631">
    <property type="entry name" value="Amidase_dom"/>
</dbReference>
<dbReference type="InterPro" id="IPR036928">
    <property type="entry name" value="AS_sf"/>
</dbReference>
<dbReference type="InterPro" id="IPR004412">
    <property type="entry name" value="GatA"/>
</dbReference>
<dbReference type="NCBIfam" id="TIGR00132">
    <property type="entry name" value="gatA"/>
    <property type="match status" value="1"/>
</dbReference>
<dbReference type="PANTHER" id="PTHR11895:SF7">
    <property type="entry name" value="GLUTAMYL-TRNA(GLN) AMIDOTRANSFERASE SUBUNIT A, MITOCHONDRIAL"/>
    <property type="match status" value="1"/>
</dbReference>
<dbReference type="PANTHER" id="PTHR11895">
    <property type="entry name" value="TRANSAMIDASE"/>
    <property type="match status" value="1"/>
</dbReference>
<dbReference type="Pfam" id="PF01425">
    <property type="entry name" value="Amidase"/>
    <property type="match status" value="1"/>
</dbReference>
<dbReference type="SUPFAM" id="SSF75304">
    <property type="entry name" value="Amidase signature (AS) enzymes"/>
    <property type="match status" value="1"/>
</dbReference>
<dbReference type="PROSITE" id="PS00571">
    <property type="entry name" value="AMIDASES"/>
    <property type="match status" value="1"/>
</dbReference>
<name>GATA_METTH</name>